<keyword id="KW-0028">Amino-acid biosynthesis</keyword>
<keyword id="KW-0057">Aromatic amino acid biosynthesis</keyword>
<keyword id="KW-0521">NADP</keyword>
<keyword id="KW-0560">Oxidoreductase</keyword>
<keyword id="KW-1185">Reference proteome</keyword>
<proteinExistence type="inferred from homology"/>
<evidence type="ECO:0000255" key="1">
    <source>
        <dbReference type="HAMAP-Rule" id="MF_00222"/>
    </source>
</evidence>
<name>AROE_ACIET</name>
<organism>
    <name type="scientific">Acidovorax ebreus (strain TPSY)</name>
    <name type="common">Diaphorobacter sp. (strain TPSY)</name>
    <dbReference type="NCBI Taxonomy" id="535289"/>
    <lineage>
        <taxon>Bacteria</taxon>
        <taxon>Pseudomonadati</taxon>
        <taxon>Pseudomonadota</taxon>
        <taxon>Betaproteobacteria</taxon>
        <taxon>Burkholderiales</taxon>
        <taxon>Comamonadaceae</taxon>
        <taxon>Diaphorobacter</taxon>
    </lineage>
</organism>
<sequence>MTAAADLYCVMGNPIAHSRSPWIHARFAQLTDQSLHYERRLVPLDGFAQALQSFAAEGGRGCNITVPFKLEAAQLATTRSERVQLAGAANTLVFDGGSIHADNTDGLGLVADITQGAGVPLAGRDVLLVGAGGAAAGVLGPLLRQHPRRIAVVNRTPARAQALVDSHAALAALQKTELLALDMQAPGADFDVIINATASSLEGGPVPVPASVLRPGSLAYDMMYGPAAQPFLDWASAHGATARDGLGMLVEQAAEAFLLWRGVRPPSAPVLQELRAAIAAGA</sequence>
<reference key="1">
    <citation type="submission" date="2009-01" db="EMBL/GenBank/DDBJ databases">
        <title>Complete sequence of Diaphorobacter sp. TPSY.</title>
        <authorList>
            <consortium name="US DOE Joint Genome Institute"/>
            <person name="Lucas S."/>
            <person name="Copeland A."/>
            <person name="Lapidus A."/>
            <person name="Glavina del Rio T."/>
            <person name="Tice H."/>
            <person name="Bruce D."/>
            <person name="Goodwin L."/>
            <person name="Pitluck S."/>
            <person name="Chertkov O."/>
            <person name="Brettin T."/>
            <person name="Detter J.C."/>
            <person name="Han C."/>
            <person name="Larimer F."/>
            <person name="Land M."/>
            <person name="Hauser L."/>
            <person name="Kyrpides N."/>
            <person name="Mikhailova N."/>
            <person name="Coates J.D."/>
        </authorList>
    </citation>
    <scope>NUCLEOTIDE SEQUENCE [LARGE SCALE GENOMIC DNA]</scope>
    <source>
        <strain>TPSY</strain>
    </source>
</reference>
<dbReference type="EC" id="1.1.1.25" evidence="1"/>
<dbReference type="EMBL" id="CP001392">
    <property type="protein sequence ID" value="ACM34399.1"/>
    <property type="molecule type" value="Genomic_DNA"/>
</dbReference>
<dbReference type="RefSeq" id="WP_015914251.1">
    <property type="nucleotide sequence ID" value="NC_011992.1"/>
</dbReference>
<dbReference type="SMR" id="B9MFP8"/>
<dbReference type="KEGG" id="dia:Dtpsy_2966"/>
<dbReference type="eggNOG" id="COG0169">
    <property type="taxonomic scope" value="Bacteria"/>
</dbReference>
<dbReference type="HOGENOM" id="CLU_044063_2_1_4"/>
<dbReference type="UniPathway" id="UPA00053">
    <property type="reaction ID" value="UER00087"/>
</dbReference>
<dbReference type="Proteomes" id="UP000000450">
    <property type="component" value="Chromosome"/>
</dbReference>
<dbReference type="GO" id="GO:0005829">
    <property type="term" value="C:cytosol"/>
    <property type="evidence" value="ECO:0007669"/>
    <property type="project" value="TreeGrafter"/>
</dbReference>
<dbReference type="GO" id="GO:0050661">
    <property type="term" value="F:NADP binding"/>
    <property type="evidence" value="ECO:0007669"/>
    <property type="project" value="InterPro"/>
</dbReference>
<dbReference type="GO" id="GO:0004764">
    <property type="term" value="F:shikimate 3-dehydrogenase (NADP+) activity"/>
    <property type="evidence" value="ECO:0007669"/>
    <property type="project" value="UniProtKB-UniRule"/>
</dbReference>
<dbReference type="GO" id="GO:0008652">
    <property type="term" value="P:amino acid biosynthetic process"/>
    <property type="evidence" value="ECO:0007669"/>
    <property type="project" value="UniProtKB-KW"/>
</dbReference>
<dbReference type="GO" id="GO:0009073">
    <property type="term" value="P:aromatic amino acid family biosynthetic process"/>
    <property type="evidence" value="ECO:0007669"/>
    <property type="project" value="UniProtKB-KW"/>
</dbReference>
<dbReference type="GO" id="GO:0009423">
    <property type="term" value="P:chorismate biosynthetic process"/>
    <property type="evidence" value="ECO:0007669"/>
    <property type="project" value="UniProtKB-UniRule"/>
</dbReference>
<dbReference type="GO" id="GO:0019632">
    <property type="term" value="P:shikimate metabolic process"/>
    <property type="evidence" value="ECO:0007669"/>
    <property type="project" value="InterPro"/>
</dbReference>
<dbReference type="CDD" id="cd01065">
    <property type="entry name" value="NAD_bind_Shikimate_DH"/>
    <property type="match status" value="1"/>
</dbReference>
<dbReference type="FunFam" id="3.40.50.10860:FF:000006">
    <property type="entry name" value="Shikimate dehydrogenase (NADP(+))"/>
    <property type="match status" value="1"/>
</dbReference>
<dbReference type="Gene3D" id="3.40.50.10860">
    <property type="entry name" value="Leucine Dehydrogenase, chain A, domain 1"/>
    <property type="match status" value="1"/>
</dbReference>
<dbReference type="Gene3D" id="3.40.50.720">
    <property type="entry name" value="NAD(P)-binding Rossmann-like Domain"/>
    <property type="match status" value="1"/>
</dbReference>
<dbReference type="HAMAP" id="MF_00222">
    <property type="entry name" value="Shikimate_DH_AroE"/>
    <property type="match status" value="1"/>
</dbReference>
<dbReference type="InterPro" id="IPR046346">
    <property type="entry name" value="Aminoacid_DH-like_N_sf"/>
</dbReference>
<dbReference type="InterPro" id="IPR036291">
    <property type="entry name" value="NAD(P)-bd_dom_sf"/>
</dbReference>
<dbReference type="InterPro" id="IPR041121">
    <property type="entry name" value="SDH_C"/>
</dbReference>
<dbReference type="InterPro" id="IPR011342">
    <property type="entry name" value="Shikimate_DH"/>
</dbReference>
<dbReference type="InterPro" id="IPR013708">
    <property type="entry name" value="Shikimate_DH-bd_N"/>
</dbReference>
<dbReference type="InterPro" id="IPR022893">
    <property type="entry name" value="Shikimate_DH_fam"/>
</dbReference>
<dbReference type="InterPro" id="IPR006151">
    <property type="entry name" value="Shikm_DH/Glu-tRNA_Rdtase"/>
</dbReference>
<dbReference type="NCBIfam" id="TIGR00507">
    <property type="entry name" value="aroE"/>
    <property type="match status" value="1"/>
</dbReference>
<dbReference type="NCBIfam" id="NF001310">
    <property type="entry name" value="PRK00258.1-2"/>
    <property type="match status" value="1"/>
</dbReference>
<dbReference type="PANTHER" id="PTHR21089:SF1">
    <property type="entry name" value="BIFUNCTIONAL 3-DEHYDROQUINATE DEHYDRATASE_SHIKIMATE DEHYDROGENASE, CHLOROPLASTIC"/>
    <property type="match status" value="1"/>
</dbReference>
<dbReference type="PANTHER" id="PTHR21089">
    <property type="entry name" value="SHIKIMATE DEHYDROGENASE"/>
    <property type="match status" value="1"/>
</dbReference>
<dbReference type="Pfam" id="PF18317">
    <property type="entry name" value="SDH_C"/>
    <property type="match status" value="1"/>
</dbReference>
<dbReference type="Pfam" id="PF01488">
    <property type="entry name" value="Shikimate_DH"/>
    <property type="match status" value="1"/>
</dbReference>
<dbReference type="Pfam" id="PF08501">
    <property type="entry name" value="Shikimate_dh_N"/>
    <property type="match status" value="1"/>
</dbReference>
<dbReference type="SUPFAM" id="SSF53223">
    <property type="entry name" value="Aminoacid dehydrogenase-like, N-terminal domain"/>
    <property type="match status" value="1"/>
</dbReference>
<dbReference type="SUPFAM" id="SSF51735">
    <property type="entry name" value="NAD(P)-binding Rossmann-fold domains"/>
    <property type="match status" value="1"/>
</dbReference>
<gene>
    <name evidence="1" type="primary">aroE</name>
    <name type="ordered locus">Dtpsy_2966</name>
</gene>
<protein>
    <recommendedName>
        <fullName evidence="1">Shikimate dehydrogenase (NADP(+))</fullName>
        <shortName evidence="1">SDH</shortName>
        <ecNumber evidence="1">1.1.1.25</ecNumber>
    </recommendedName>
</protein>
<feature type="chain" id="PRO_1000124882" description="Shikimate dehydrogenase (NADP(+))">
    <location>
        <begin position="1"/>
        <end position="282"/>
    </location>
</feature>
<feature type="active site" description="Proton acceptor" evidence="1">
    <location>
        <position position="69"/>
    </location>
</feature>
<feature type="binding site" evidence="1">
    <location>
        <begin position="18"/>
        <end position="20"/>
    </location>
    <ligand>
        <name>shikimate</name>
        <dbReference type="ChEBI" id="CHEBI:36208"/>
    </ligand>
</feature>
<feature type="binding site" evidence="1">
    <location>
        <position position="65"/>
    </location>
    <ligand>
        <name>shikimate</name>
        <dbReference type="ChEBI" id="CHEBI:36208"/>
    </ligand>
</feature>
<feature type="binding site" evidence="1">
    <location>
        <position position="81"/>
    </location>
    <ligand>
        <name>NADP(+)</name>
        <dbReference type="ChEBI" id="CHEBI:58349"/>
    </ligand>
</feature>
<feature type="binding site" evidence="1">
    <location>
        <position position="90"/>
    </location>
    <ligand>
        <name>shikimate</name>
        <dbReference type="ChEBI" id="CHEBI:36208"/>
    </ligand>
</feature>
<feature type="binding site" evidence="1">
    <location>
        <position position="105"/>
    </location>
    <ligand>
        <name>shikimate</name>
        <dbReference type="ChEBI" id="CHEBI:36208"/>
    </ligand>
</feature>
<feature type="binding site" evidence="1">
    <location>
        <begin position="130"/>
        <end position="134"/>
    </location>
    <ligand>
        <name>NADP(+)</name>
        <dbReference type="ChEBI" id="CHEBI:58349"/>
    </ligand>
</feature>
<feature type="binding site" evidence="1">
    <location>
        <begin position="154"/>
        <end position="159"/>
    </location>
    <ligand>
        <name>NADP(+)</name>
        <dbReference type="ChEBI" id="CHEBI:58349"/>
    </ligand>
</feature>
<feature type="binding site" evidence="1">
    <location>
        <position position="222"/>
    </location>
    <ligand>
        <name>NADP(+)</name>
        <dbReference type="ChEBI" id="CHEBI:58349"/>
    </ligand>
</feature>
<feature type="binding site" evidence="1">
    <location>
        <position position="224"/>
    </location>
    <ligand>
        <name>shikimate</name>
        <dbReference type="ChEBI" id="CHEBI:36208"/>
    </ligand>
</feature>
<feature type="binding site" evidence="1">
    <location>
        <position position="245"/>
    </location>
    <ligand>
        <name>NADP(+)</name>
        <dbReference type="ChEBI" id="CHEBI:58349"/>
    </ligand>
</feature>
<accession>B9MFP8</accession>
<comment type="function">
    <text evidence="1">Involved in the biosynthesis of the chorismate, which leads to the biosynthesis of aromatic amino acids. Catalyzes the reversible NADPH linked reduction of 3-dehydroshikimate (DHSA) to yield shikimate (SA).</text>
</comment>
<comment type="catalytic activity">
    <reaction evidence="1">
        <text>shikimate + NADP(+) = 3-dehydroshikimate + NADPH + H(+)</text>
        <dbReference type="Rhea" id="RHEA:17737"/>
        <dbReference type="ChEBI" id="CHEBI:15378"/>
        <dbReference type="ChEBI" id="CHEBI:16630"/>
        <dbReference type="ChEBI" id="CHEBI:36208"/>
        <dbReference type="ChEBI" id="CHEBI:57783"/>
        <dbReference type="ChEBI" id="CHEBI:58349"/>
        <dbReference type="EC" id="1.1.1.25"/>
    </reaction>
</comment>
<comment type="pathway">
    <text evidence="1">Metabolic intermediate biosynthesis; chorismate biosynthesis; chorismate from D-erythrose 4-phosphate and phosphoenolpyruvate: step 4/7.</text>
</comment>
<comment type="subunit">
    <text evidence="1">Homodimer.</text>
</comment>
<comment type="similarity">
    <text evidence="1">Belongs to the shikimate dehydrogenase family.</text>
</comment>